<organism>
    <name type="scientific">Gallus gallus</name>
    <name type="common">Chicken</name>
    <dbReference type="NCBI Taxonomy" id="9031"/>
    <lineage>
        <taxon>Eukaryota</taxon>
        <taxon>Metazoa</taxon>
        <taxon>Chordata</taxon>
        <taxon>Craniata</taxon>
        <taxon>Vertebrata</taxon>
        <taxon>Euteleostomi</taxon>
        <taxon>Archelosauria</taxon>
        <taxon>Archosauria</taxon>
        <taxon>Dinosauria</taxon>
        <taxon>Saurischia</taxon>
        <taxon>Theropoda</taxon>
        <taxon>Coelurosauria</taxon>
        <taxon>Aves</taxon>
        <taxon>Neognathae</taxon>
        <taxon>Galloanserae</taxon>
        <taxon>Galliformes</taxon>
        <taxon>Phasianidae</taxon>
        <taxon>Phasianinae</taxon>
        <taxon>Gallus</taxon>
    </lineage>
</organism>
<keyword id="KW-0963">Cytoplasm</keyword>
<keyword id="KW-0227">DNA damage</keyword>
<keyword id="KW-0234">DNA repair</keyword>
<keyword id="KW-0496">Mitochondrion</keyword>
<keyword id="KW-0539">Nucleus</keyword>
<keyword id="KW-1185">Reference proteome</keyword>
<keyword id="KW-0677">Repeat</keyword>
<keyword id="KW-0802">TPR repeat</keyword>
<keyword id="KW-0808">Transferase</keyword>
<keyword id="KW-0833">Ubl conjugation pathway</keyword>
<feature type="chain" id="PRO_0000106331" description="E3 ubiquitin-protein ligase CHIP">
    <location>
        <begin position="1"/>
        <end position="314"/>
    </location>
</feature>
<feature type="repeat" description="TPR 1">
    <location>
        <begin position="36"/>
        <end position="69"/>
    </location>
</feature>
<feature type="repeat" description="TPR 2">
    <location>
        <begin position="70"/>
        <end position="103"/>
    </location>
</feature>
<feature type="repeat" description="TPR 3">
    <location>
        <begin position="105"/>
        <end position="137"/>
    </location>
</feature>
<feature type="domain" description="U-box">
    <location>
        <begin position="237"/>
        <end position="311"/>
    </location>
</feature>
<feature type="region of interest" description="Disordered" evidence="4">
    <location>
        <begin position="1"/>
        <end position="47"/>
    </location>
</feature>
<feature type="compositionally biased region" description="Basic and acidic residues" evidence="4">
    <location>
        <begin position="1"/>
        <end position="11"/>
    </location>
</feature>
<feature type="compositionally biased region" description="Gly residues" evidence="4">
    <location>
        <begin position="12"/>
        <end position="29"/>
    </location>
</feature>
<feature type="compositionally biased region" description="Basic and acidic residues" evidence="4">
    <location>
        <begin position="31"/>
        <end position="43"/>
    </location>
</feature>
<dbReference type="EC" id="2.3.2.27" evidence="2 3"/>
<dbReference type="EMBL" id="AJ720999">
    <property type="protein sequence ID" value="CAG32658.1"/>
    <property type="molecule type" value="mRNA"/>
</dbReference>
<dbReference type="RefSeq" id="NP_001026577.1">
    <property type="nucleotide sequence ID" value="NM_001031406.2"/>
</dbReference>
<dbReference type="BMRB" id="Q5ZHY5"/>
<dbReference type="SMR" id="Q5ZHY5"/>
<dbReference type="BioGRID" id="686366">
    <property type="interactions" value="1"/>
</dbReference>
<dbReference type="FunCoup" id="Q5ZHY5">
    <property type="interactions" value="2234"/>
</dbReference>
<dbReference type="IntAct" id="Q5ZHY5">
    <property type="interactions" value="1"/>
</dbReference>
<dbReference type="STRING" id="9031.ENSGALP00000057641"/>
<dbReference type="PaxDb" id="9031-ENSGALP00000001527"/>
<dbReference type="GeneID" id="426918"/>
<dbReference type="KEGG" id="gga:426918"/>
<dbReference type="CTD" id="10273"/>
<dbReference type="VEuPathDB" id="HostDB:geneid_426918"/>
<dbReference type="eggNOG" id="KOG4642">
    <property type="taxonomic scope" value="Eukaryota"/>
</dbReference>
<dbReference type="HOGENOM" id="CLU_056455_1_0_1"/>
<dbReference type="InParanoid" id="Q5ZHY5"/>
<dbReference type="OrthoDB" id="629492at2759"/>
<dbReference type="PhylomeDB" id="Q5ZHY5"/>
<dbReference type="Reactome" id="R-GGA-2173788">
    <property type="pathway name" value="Downregulation of TGF-beta receptor signaling"/>
</dbReference>
<dbReference type="Reactome" id="R-GGA-5357905">
    <property type="pathway name" value="Regulation of TNFR1 signaling"/>
</dbReference>
<dbReference type="Reactome" id="R-GGA-8863795">
    <property type="pathway name" value="Downregulation of ERBB2 signaling"/>
</dbReference>
<dbReference type="Reactome" id="R-GGA-8939902">
    <property type="pathway name" value="Regulation of RUNX2 expression and activity"/>
</dbReference>
<dbReference type="Reactome" id="R-GGA-8948751">
    <property type="pathway name" value="Regulation of PTEN stability and activity"/>
</dbReference>
<dbReference type="Reactome" id="R-GGA-983168">
    <property type="pathway name" value="Antigen processing: Ubiquitination &amp; Proteasome degradation"/>
</dbReference>
<dbReference type="PRO" id="PR:Q5ZHY5"/>
<dbReference type="Proteomes" id="UP000000539">
    <property type="component" value="Chromosome 14"/>
</dbReference>
<dbReference type="Bgee" id="ENSGALG00000041432">
    <property type="expression patterns" value="Expressed in cerebellum and 13 other cell types or tissues"/>
</dbReference>
<dbReference type="GO" id="GO:0005737">
    <property type="term" value="C:cytoplasm"/>
    <property type="evidence" value="ECO:0000250"/>
    <property type="project" value="UniProtKB"/>
</dbReference>
<dbReference type="GO" id="GO:0005739">
    <property type="term" value="C:mitochondrion"/>
    <property type="evidence" value="ECO:0007669"/>
    <property type="project" value="UniProtKB-SubCell"/>
</dbReference>
<dbReference type="GO" id="GO:0005634">
    <property type="term" value="C:nucleus"/>
    <property type="evidence" value="ECO:0007669"/>
    <property type="project" value="UniProtKB-SubCell"/>
</dbReference>
<dbReference type="GO" id="GO:0030018">
    <property type="term" value="C:Z disc"/>
    <property type="evidence" value="ECO:0000318"/>
    <property type="project" value="GO_Central"/>
</dbReference>
<dbReference type="GO" id="GO:0042803">
    <property type="term" value="F:protein homodimerization activity"/>
    <property type="evidence" value="ECO:0000250"/>
    <property type="project" value="UniProtKB"/>
</dbReference>
<dbReference type="GO" id="GO:0051087">
    <property type="term" value="F:protein-folding chaperone binding"/>
    <property type="evidence" value="ECO:0000318"/>
    <property type="project" value="GO_Central"/>
</dbReference>
<dbReference type="GO" id="GO:0061630">
    <property type="term" value="F:ubiquitin protein ligase activity"/>
    <property type="evidence" value="ECO:0000250"/>
    <property type="project" value="UniProtKB"/>
</dbReference>
<dbReference type="GO" id="GO:0004842">
    <property type="term" value="F:ubiquitin-protein transferase activity"/>
    <property type="evidence" value="ECO:0000250"/>
    <property type="project" value="UniProtKB"/>
</dbReference>
<dbReference type="GO" id="GO:0034450">
    <property type="term" value="F:ubiquitin-ubiquitin ligase activity"/>
    <property type="evidence" value="ECO:0000250"/>
    <property type="project" value="UniProtKB"/>
</dbReference>
<dbReference type="GO" id="GO:0071218">
    <property type="term" value="P:cellular response to misfolded protein"/>
    <property type="evidence" value="ECO:0000250"/>
    <property type="project" value="UniProtKB"/>
</dbReference>
<dbReference type="GO" id="GO:0006281">
    <property type="term" value="P:DNA repair"/>
    <property type="evidence" value="ECO:0007669"/>
    <property type="project" value="UniProtKB-KW"/>
</dbReference>
<dbReference type="GO" id="GO:0045862">
    <property type="term" value="P:positive regulation of proteolysis"/>
    <property type="evidence" value="ECO:0000318"/>
    <property type="project" value="GO_Central"/>
</dbReference>
<dbReference type="GO" id="GO:0043161">
    <property type="term" value="P:proteasome-mediated ubiquitin-dependent protein catabolic process"/>
    <property type="evidence" value="ECO:0000250"/>
    <property type="project" value="UniProtKB"/>
</dbReference>
<dbReference type="GO" id="GO:0000209">
    <property type="term" value="P:protein polyubiquitination"/>
    <property type="evidence" value="ECO:0000250"/>
    <property type="project" value="UniProtKB"/>
</dbReference>
<dbReference type="GO" id="GO:0006515">
    <property type="term" value="P:protein quality control for misfolded or incompletely synthesized proteins"/>
    <property type="evidence" value="ECO:0000250"/>
    <property type="project" value="UniProtKB"/>
</dbReference>
<dbReference type="GO" id="GO:0006511">
    <property type="term" value="P:ubiquitin-dependent protein catabolic process"/>
    <property type="evidence" value="ECO:0000250"/>
    <property type="project" value="UniProtKB"/>
</dbReference>
<dbReference type="CDD" id="cd16654">
    <property type="entry name" value="RING-Ubox_CHIP"/>
    <property type="match status" value="1"/>
</dbReference>
<dbReference type="FunFam" id="1.25.40.10:FF:000198">
    <property type="entry name" value="E3 ubiquitin-protein ligase CHIP isoform X2"/>
    <property type="match status" value="1"/>
</dbReference>
<dbReference type="FunFam" id="3.30.40.10:FF:000124">
    <property type="entry name" value="STIP1 homology and U box-containing protein 1"/>
    <property type="match status" value="1"/>
</dbReference>
<dbReference type="Gene3D" id="6.10.140.2020">
    <property type="match status" value="1"/>
</dbReference>
<dbReference type="Gene3D" id="1.25.40.10">
    <property type="entry name" value="Tetratricopeptide repeat domain"/>
    <property type="match status" value="1"/>
</dbReference>
<dbReference type="Gene3D" id="3.30.40.10">
    <property type="entry name" value="Zinc/RING finger domain, C3HC4 (zinc finger)"/>
    <property type="match status" value="1"/>
</dbReference>
<dbReference type="InterPro" id="IPR045202">
    <property type="entry name" value="CHIP_RING-Ubox"/>
</dbReference>
<dbReference type="InterPro" id="IPR041312">
    <property type="entry name" value="CHIP_TPR_N"/>
</dbReference>
<dbReference type="InterPro" id="IPR011990">
    <property type="entry name" value="TPR-like_helical_dom_sf"/>
</dbReference>
<dbReference type="InterPro" id="IPR019734">
    <property type="entry name" value="TPR_rpt"/>
</dbReference>
<dbReference type="InterPro" id="IPR003613">
    <property type="entry name" value="Ubox_domain"/>
</dbReference>
<dbReference type="InterPro" id="IPR013083">
    <property type="entry name" value="Znf_RING/FYVE/PHD"/>
</dbReference>
<dbReference type="PANTHER" id="PTHR46803">
    <property type="entry name" value="E3 UBIQUITIN-PROTEIN LIGASE CHIP"/>
    <property type="match status" value="1"/>
</dbReference>
<dbReference type="PANTHER" id="PTHR46803:SF2">
    <property type="entry name" value="E3 UBIQUITIN-PROTEIN LIGASE CHIP"/>
    <property type="match status" value="1"/>
</dbReference>
<dbReference type="Pfam" id="PF12895">
    <property type="entry name" value="ANAPC3"/>
    <property type="match status" value="1"/>
</dbReference>
<dbReference type="Pfam" id="PF18391">
    <property type="entry name" value="CHIP_TPR_N"/>
    <property type="match status" value="1"/>
</dbReference>
<dbReference type="Pfam" id="PF04564">
    <property type="entry name" value="U-box"/>
    <property type="match status" value="1"/>
</dbReference>
<dbReference type="SMART" id="SM00028">
    <property type="entry name" value="TPR"/>
    <property type="match status" value="3"/>
</dbReference>
<dbReference type="SMART" id="SM00504">
    <property type="entry name" value="Ubox"/>
    <property type="match status" value="1"/>
</dbReference>
<dbReference type="SUPFAM" id="SSF57850">
    <property type="entry name" value="RING/U-box"/>
    <property type="match status" value="1"/>
</dbReference>
<dbReference type="SUPFAM" id="SSF48452">
    <property type="entry name" value="TPR-like"/>
    <property type="match status" value="1"/>
</dbReference>
<dbReference type="PROSITE" id="PS50005">
    <property type="entry name" value="TPR"/>
    <property type="match status" value="3"/>
</dbReference>
<dbReference type="PROSITE" id="PS50293">
    <property type="entry name" value="TPR_REGION"/>
    <property type="match status" value="1"/>
</dbReference>
<dbReference type="PROSITE" id="PS51698">
    <property type="entry name" value="U_BOX"/>
    <property type="match status" value="1"/>
</dbReference>
<sequence length="314" mass="35661">MKGKEEREREGGGGAVGPGAAGPGAGGGSPEKSHSAQEHKEQGNRLFGGRKYPEAAAAYGRAINRNPLVAVYYTNRALCYLKMQQHDKALADCKRALELDGQSVKAHFFLGQCQMEMENYDEAIANLQRAYNLAKEQRLNFGDDIPSALRIAKKKRWNSIEEKRINQENELHSYLTRLIMAEKERELAECRKAQQEENVDESRGRVQLAGIEAKHDKYLADMDELFSQVDEKRKKRDIPDYLCGKISFELMREPCITPSGITYDRKDIEEHLQRVGHFDPVTRSPLTQDQLIPNLAMKEVIDAFISENGWVEDY</sequence>
<proteinExistence type="evidence at transcript level"/>
<protein>
    <recommendedName>
        <fullName evidence="5">E3 ubiquitin-protein ligase CHIP</fullName>
        <ecNumber evidence="2 3">2.3.2.27</ecNumber>
    </recommendedName>
    <alternativeName>
        <fullName evidence="5">RING-type E3 ubiquitin transferase CHIP</fullName>
    </alternativeName>
    <alternativeName>
        <fullName evidence="5">STIP1 homology and U box-containing protein 1</fullName>
    </alternativeName>
</protein>
<comment type="function">
    <text evidence="2">E3 ubiquitin-protein ligase which targets misfolded chaperone substrates towards proteasomal degradation (By similarity). Collaborates with ATXN3 in the degradation of misfolded chaperone substrates: ATXN3 restricting the length of ubiquitin chain attached to STUB1/CHIP substrates and preventing further chain extension (By similarity).</text>
</comment>
<comment type="catalytic activity">
    <reaction evidence="2 3">
        <text>S-ubiquitinyl-[E2 ubiquitin-conjugating enzyme]-L-cysteine + [acceptor protein]-L-lysine = [E2 ubiquitin-conjugating enzyme]-L-cysteine + N(6)-ubiquitinyl-[acceptor protein]-L-lysine.</text>
        <dbReference type="EC" id="2.3.2.27"/>
    </reaction>
</comment>
<comment type="subunit">
    <text evidence="2">Homodimer.</text>
</comment>
<comment type="subcellular location">
    <subcellularLocation>
        <location evidence="2 3">Cytoplasm</location>
    </subcellularLocation>
    <subcellularLocation>
        <location evidence="2">Nucleus</location>
    </subcellularLocation>
    <subcellularLocation>
        <location evidence="1">Mitochondrion</location>
    </subcellularLocation>
</comment>
<comment type="domain">
    <text evidence="3">The U-box domain is required for the ubiquitin protein ligase activity.</text>
</comment>
<accession>Q5ZHY5</accession>
<reference key="1">
    <citation type="journal article" date="2005" name="Genome Biol.">
        <title>Full-length cDNAs from chicken bursal lymphocytes to facilitate gene function analysis.</title>
        <authorList>
            <person name="Caldwell R.B."/>
            <person name="Kierzek A.M."/>
            <person name="Arakawa H."/>
            <person name="Bezzubov Y."/>
            <person name="Zaim J."/>
            <person name="Fiedler P."/>
            <person name="Kutter S."/>
            <person name="Blagodatski A."/>
            <person name="Kostovska D."/>
            <person name="Koter M."/>
            <person name="Plachy J."/>
            <person name="Carninci P."/>
            <person name="Hayashizaki Y."/>
            <person name="Buerstedde J.-M."/>
        </authorList>
    </citation>
    <scope>NUCLEOTIDE SEQUENCE [LARGE SCALE MRNA]</scope>
    <source>
        <strain>CB</strain>
        <tissue>Bursa of Fabricius</tissue>
    </source>
</reference>
<name>CHIP_CHICK</name>
<gene>
    <name evidence="5" type="primary">STUB1</name>
    <name evidence="6" type="ORF">RCJMB04_32b21</name>
</gene>
<evidence type="ECO:0000250" key="1">
    <source>
        <dbReference type="UniProtKB" id="A6HD62"/>
    </source>
</evidence>
<evidence type="ECO:0000250" key="2">
    <source>
        <dbReference type="UniProtKB" id="Q9UNE7"/>
    </source>
</evidence>
<evidence type="ECO:0000250" key="3">
    <source>
        <dbReference type="UniProtKB" id="Q9WUD1"/>
    </source>
</evidence>
<evidence type="ECO:0000256" key="4">
    <source>
        <dbReference type="SAM" id="MobiDB-lite"/>
    </source>
</evidence>
<evidence type="ECO:0000305" key="5"/>
<evidence type="ECO:0000312" key="6">
    <source>
        <dbReference type="EMBL" id="CAG32658.1"/>
    </source>
</evidence>